<name>GNAI_DROME</name>
<organism>
    <name type="scientific">Drosophila melanogaster</name>
    <name type="common">Fruit fly</name>
    <dbReference type="NCBI Taxonomy" id="7227"/>
    <lineage>
        <taxon>Eukaryota</taxon>
        <taxon>Metazoa</taxon>
        <taxon>Ecdysozoa</taxon>
        <taxon>Arthropoda</taxon>
        <taxon>Hexapoda</taxon>
        <taxon>Insecta</taxon>
        <taxon>Pterygota</taxon>
        <taxon>Neoptera</taxon>
        <taxon>Endopterygota</taxon>
        <taxon>Diptera</taxon>
        <taxon>Brachycera</taxon>
        <taxon>Muscomorpha</taxon>
        <taxon>Ephydroidea</taxon>
        <taxon>Drosophilidae</taxon>
        <taxon>Drosophila</taxon>
        <taxon>Sophophora</taxon>
    </lineage>
</organism>
<accession>P20353</accession>
<accession>Q9VS04</accession>
<feature type="initiator methionine" description="Removed" evidence="1">
    <location>
        <position position="1"/>
    </location>
</feature>
<feature type="chain" id="PRO_0000203689" description="G protein alpha i subunit">
    <location>
        <begin position="2"/>
        <end position="355"/>
    </location>
</feature>
<feature type="domain" description="G-alpha" evidence="3">
    <location>
        <begin position="33"/>
        <end position="355"/>
    </location>
</feature>
<feature type="region of interest" description="G1 motif" evidence="3">
    <location>
        <begin position="36"/>
        <end position="49"/>
    </location>
</feature>
<feature type="region of interest" description="G2 motif" evidence="3">
    <location>
        <begin position="174"/>
        <end position="182"/>
    </location>
</feature>
<feature type="region of interest" description="G3 motif" evidence="3">
    <location>
        <begin position="197"/>
        <end position="206"/>
    </location>
</feature>
<feature type="region of interest" description="G4 motif" evidence="3">
    <location>
        <begin position="266"/>
        <end position="273"/>
    </location>
</feature>
<feature type="region of interest" description="G5 motif" evidence="3">
    <location>
        <begin position="325"/>
        <end position="330"/>
    </location>
</feature>
<feature type="binding site" evidence="1">
    <location>
        <begin position="41"/>
        <end position="48"/>
    </location>
    <ligand>
        <name>GTP</name>
        <dbReference type="ChEBI" id="CHEBI:37565"/>
    </ligand>
</feature>
<feature type="binding site" evidence="1">
    <location>
        <position position="48"/>
    </location>
    <ligand>
        <name>Mg(2+)</name>
        <dbReference type="ChEBI" id="CHEBI:18420"/>
    </ligand>
</feature>
<feature type="binding site" evidence="1">
    <location>
        <begin position="176"/>
        <end position="182"/>
    </location>
    <ligand>
        <name>GTP</name>
        <dbReference type="ChEBI" id="CHEBI:37565"/>
    </ligand>
</feature>
<feature type="binding site" evidence="1">
    <location>
        <position position="182"/>
    </location>
    <ligand>
        <name>Mg(2+)</name>
        <dbReference type="ChEBI" id="CHEBI:18420"/>
    </ligand>
</feature>
<feature type="binding site" evidence="1">
    <location>
        <begin position="201"/>
        <end position="205"/>
    </location>
    <ligand>
        <name>GTP</name>
        <dbReference type="ChEBI" id="CHEBI:37565"/>
    </ligand>
</feature>
<feature type="binding site" evidence="1">
    <location>
        <begin position="270"/>
        <end position="273"/>
    </location>
    <ligand>
        <name>GTP</name>
        <dbReference type="ChEBI" id="CHEBI:37565"/>
    </ligand>
</feature>
<feature type="binding site" evidence="1">
    <location>
        <position position="327"/>
    </location>
    <ligand>
        <name>GTP</name>
        <dbReference type="ChEBI" id="CHEBI:37565"/>
    </ligand>
</feature>
<feature type="lipid moiety-binding region" description="N-myristoyl glycine" evidence="2">
    <location>
        <position position="2"/>
    </location>
</feature>
<feature type="lipid moiety-binding region" description="S-palmitoyl cysteine" evidence="2">
    <location>
        <position position="3"/>
    </location>
</feature>
<feature type="mutagenesis site" description="Inhibits interaction with loco. Does not inhibit apical cell membrane localization in neuroblasts." evidence="5">
    <original>Q</original>
    <variation>L</variation>
    <location>
        <position position="205"/>
    </location>
</feature>
<feature type="sequence conflict" description="In Ref. 1; AAA28565." evidence="7" ref="1">
    <original>S</original>
    <variation>T</variation>
    <location>
        <position position="140"/>
    </location>
</feature>
<keyword id="KW-1003">Cell membrane</keyword>
<keyword id="KW-0221">Differentiation</keyword>
<keyword id="KW-0342">GTP-binding</keyword>
<keyword id="KW-0449">Lipoprotein</keyword>
<keyword id="KW-0460">Magnesium</keyword>
<keyword id="KW-0472">Membrane</keyword>
<keyword id="KW-0479">Metal-binding</keyword>
<keyword id="KW-0519">Myristate</keyword>
<keyword id="KW-0547">Nucleotide-binding</keyword>
<keyword id="KW-0564">Palmitate</keyword>
<keyword id="KW-1185">Reference proteome</keyword>
<keyword id="KW-0807">Transducer</keyword>
<protein>
    <recommendedName>
        <fullName>G protein alpha i subunit</fullName>
    </recommendedName>
    <alternativeName>
        <fullName>Guanine nucleotide-binding protein G(i) subunit alpha 65A</fullName>
    </alternativeName>
</protein>
<comment type="function">
    <text evidence="4 5">Guanine nucleotide-binding proteins (G proteins) are involved as modulators or transducers in various transmembrane signaling systems. Plays a role in glial cell differentiation during embryogenesis; loco, Galphao and the G-protein coupled receptor, moody, are required in the surface glia to achieve effective insulation of the nerve cord.</text>
</comment>
<comment type="subunit">
    <text evidence="4 5">G proteins are composed of 3 units; alpha, beta and gamma. The alpha chain contains the guanine nucleotide binding site. Interacts (via GDP- or GTP-bound forms) with loco (via GoLoco and RGS domains). Interacts with raps/pins.</text>
</comment>
<comment type="subcellular location">
    <subcellularLocation>
        <location evidence="5">Cell membrane</location>
    </subcellularLocation>
    <subcellularLocation>
        <location evidence="5">Apical cell membrane</location>
    </subcellularLocation>
    <text>Colocalizes with loco and raps/pins at the apical cortex throughout mitosis in neuroblasts.</text>
</comment>
<comment type="developmental stage">
    <text evidence="4 6">Expressed in the surface glial cells of the nerve cords at the larval stage (at protein level). Expressed primarily in embryos and pupae.</text>
</comment>
<comment type="similarity">
    <text evidence="7">Belongs to the G-alpha family. G(i/o/t/z) subfamily.</text>
</comment>
<reference key="1">
    <citation type="journal article" date="1988" name="J. Biol. Chem.">
        <title>A Drosophila melanogaster G protein alpha subunit gene is expressed primarily in embryos and pupae.</title>
        <authorList>
            <person name="Provost N.M."/>
            <person name="Somers D.E."/>
            <person name="Hurley J.B."/>
        </authorList>
    </citation>
    <scope>NUCLEOTIDE SEQUENCE [GENOMIC DNA]</scope>
    <scope>DEVELOPMENTAL STAGE</scope>
    <source>
        <strain>Canton-S</strain>
    </source>
</reference>
<reference key="2">
    <citation type="journal article" date="2000" name="Science">
        <title>The genome sequence of Drosophila melanogaster.</title>
        <authorList>
            <person name="Adams M.D."/>
            <person name="Celniker S.E."/>
            <person name="Holt R.A."/>
            <person name="Evans C.A."/>
            <person name="Gocayne J.D."/>
            <person name="Amanatides P.G."/>
            <person name="Scherer S.E."/>
            <person name="Li P.W."/>
            <person name="Hoskins R.A."/>
            <person name="Galle R.F."/>
            <person name="George R.A."/>
            <person name="Lewis S.E."/>
            <person name="Richards S."/>
            <person name="Ashburner M."/>
            <person name="Henderson S.N."/>
            <person name="Sutton G.G."/>
            <person name="Wortman J.R."/>
            <person name="Yandell M.D."/>
            <person name="Zhang Q."/>
            <person name="Chen L.X."/>
            <person name="Brandon R.C."/>
            <person name="Rogers Y.-H.C."/>
            <person name="Blazej R.G."/>
            <person name="Champe M."/>
            <person name="Pfeiffer B.D."/>
            <person name="Wan K.H."/>
            <person name="Doyle C."/>
            <person name="Baxter E.G."/>
            <person name="Helt G."/>
            <person name="Nelson C.R."/>
            <person name="Miklos G.L.G."/>
            <person name="Abril J.F."/>
            <person name="Agbayani A."/>
            <person name="An H.-J."/>
            <person name="Andrews-Pfannkoch C."/>
            <person name="Baldwin D."/>
            <person name="Ballew R.M."/>
            <person name="Basu A."/>
            <person name="Baxendale J."/>
            <person name="Bayraktaroglu L."/>
            <person name="Beasley E.M."/>
            <person name="Beeson K.Y."/>
            <person name="Benos P.V."/>
            <person name="Berman B.P."/>
            <person name="Bhandari D."/>
            <person name="Bolshakov S."/>
            <person name="Borkova D."/>
            <person name="Botchan M.R."/>
            <person name="Bouck J."/>
            <person name="Brokstein P."/>
            <person name="Brottier P."/>
            <person name="Burtis K.C."/>
            <person name="Busam D.A."/>
            <person name="Butler H."/>
            <person name="Cadieu E."/>
            <person name="Center A."/>
            <person name="Chandra I."/>
            <person name="Cherry J.M."/>
            <person name="Cawley S."/>
            <person name="Dahlke C."/>
            <person name="Davenport L.B."/>
            <person name="Davies P."/>
            <person name="de Pablos B."/>
            <person name="Delcher A."/>
            <person name="Deng Z."/>
            <person name="Mays A.D."/>
            <person name="Dew I."/>
            <person name="Dietz S.M."/>
            <person name="Dodson K."/>
            <person name="Doup L.E."/>
            <person name="Downes M."/>
            <person name="Dugan-Rocha S."/>
            <person name="Dunkov B.C."/>
            <person name="Dunn P."/>
            <person name="Durbin K.J."/>
            <person name="Evangelista C.C."/>
            <person name="Ferraz C."/>
            <person name="Ferriera S."/>
            <person name="Fleischmann W."/>
            <person name="Fosler C."/>
            <person name="Gabrielian A.E."/>
            <person name="Garg N.S."/>
            <person name="Gelbart W.M."/>
            <person name="Glasser K."/>
            <person name="Glodek A."/>
            <person name="Gong F."/>
            <person name="Gorrell J.H."/>
            <person name="Gu Z."/>
            <person name="Guan P."/>
            <person name="Harris M."/>
            <person name="Harris N.L."/>
            <person name="Harvey D.A."/>
            <person name="Heiman T.J."/>
            <person name="Hernandez J.R."/>
            <person name="Houck J."/>
            <person name="Hostin D."/>
            <person name="Houston K.A."/>
            <person name="Howland T.J."/>
            <person name="Wei M.-H."/>
            <person name="Ibegwam C."/>
            <person name="Jalali M."/>
            <person name="Kalush F."/>
            <person name="Karpen G.H."/>
            <person name="Ke Z."/>
            <person name="Kennison J.A."/>
            <person name="Ketchum K.A."/>
            <person name="Kimmel B.E."/>
            <person name="Kodira C.D."/>
            <person name="Kraft C.L."/>
            <person name="Kravitz S."/>
            <person name="Kulp D."/>
            <person name="Lai Z."/>
            <person name="Lasko P."/>
            <person name="Lei Y."/>
            <person name="Levitsky A.A."/>
            <person name="Li J.H."/>
            <person name="Li Z."/>
            <person name="Liang Y."/>
            <person name="Lin X."/>
            <person name="Liu X."/>
            <person name="Mattei B."/>
            <person name="McIntosh T.C."/>
            <person name="McLeod M.P."/>
            <person name="McPherson D."/>
            <person name="Merkulov G."/>
            <person name="Milshina N.V."/>
            <person name="Mobarry C."/>
            <person name="Morris J."/>
            <person name="Moshrefi A."/>
            <person name="Mount S.M."/>
            <person name="Moy M."/>
            <person name="Murphy B."/>
            <person name="Murphy L."/>
            <person name="Muzny D.M."/>
            <person name="Nelson D.L."/>
            <person name="Nelson D.R."/>
            <person name="Nelson K.A."/>
            <person name="Nixon K."/>
            <person name="Nusskern D.R."/>
            <person name="Pacleb J.M."/>
            <person name="Palazzolo M."/>
            <person name="Pittman G.S."/>
            <person name="Pan S."/>
            <person name="Pollard J."/>
            <person name="Puri V."/>
            <person name="Reese M.G."/>
            <person name="Reinert K."/>
            <person name="Remington K."/>
            <person name="Saunders R.D.C."/>
            <person name="Scheeler F."/>
            <person name="Shen H."/>
            <person name="Shue B.C."/>
            <person name="Siden-Kiamos I."/>
            <person name="Simpson M."/>
            <person name="Skupski M.P."/>
            <person name="Smith T.J."/>
            <person name="Spier E."/>
            <person name="Spradling A.C."/>
            <person name="Stapleton M."/>
            <person name="Strong R."/>
            <person name="Sun E."/>
            <person name="Svirskas R."/>
            <person name="Tector C."/>
            <person name="Turner R."/>
            <person name="Venter E."/>
            <person name="Wang A.H."/>
            <person name="Wang X."/>
            <person name="Wang Z.-Y."/>
            <person name="Wassarman D.A."/>
            <person name="Weinstock G.M."/>
            <person name="Weissenbach J."/>
            <person name="Williams S.M."/>
            <person name="Woodage T."/>
            <person name="Worley K.C."/>
            <person name="Wu D."/>
            <person name="Yang S."/>
            <person name="Yao Q.A."/>
            <person name="Ye J."/>
            <person name="Yeh R.-F."/>
            <person name="Zaveri J.S."/>
            <person name="Zhan M."/>
            <person name="Zhang G."/>
            <person name="Zhao Q."/>
            <person name="Zheng L."/>
            <person name="Zheng X.H."/>
            <person name="Zhong F.N."/>
            <person name="Zhong W."/>
            <person name="Zhou X."/>
            <person name="Zhu S.C."/>
            <person name="Zhu X."/>
            <person name="Smith H.O."/>
            <person name="Gibbs R.A."/>
            <person name="Myers E.W."/>
            <person name="Rubin G.M."/>
            <person name="Venter J.C."/>
        </authorList>
    </citation>
    <scope>NUCLEOTIDE SEQUENCE [LARGE SCALE GENOMIC DNA]</scope>
    <source>
        <strain>Berkeley</strain>
    </source>
</reference>
<reference key="3">
    <citation type="journal article" date="2002" name="Genome Biol.">
        <title>Annotation of the Drosophila melanogaster euchromatic genome: a systematic review.</title>
        <authorList>
            <person name="Misra S."/>
            <person name="Crosby M.A."/>
            <person name="Mungall C.J."/>
            <person name="Matthews B.B."/>
            <person name="Campbell K.S."/>
            <person name="Hradecky P."/>
            <person name="Huang Y."/>
            <person name="Kaminker J.S."/>
            <person name="Millburn G.H."/>
            <person name="Prochnik S.E."/>
            <person name="Smith C.D."/>
            <person name="Tupy J.L."/>
            <person name="Whitfield E.J."/>
            <person name="Bayraktaroglu L."/>
            <person name="Berman B.P."/>
            <person name="Bettencourt B.R."/>
            <person name="Celniker S.E."/>
            <person name="de Grey A.D.N.J."/>
            <person name="Drysdale R.A."/>
            <person name="Harris N.L."/>
            <person name="Richter J."/>
            <person name="Russo S."/>
            <person name="Schroeder A.J."/>
            <person name="Shu S.Q."/>
            <person name="Stapleton M."/>
            <person name="Yamada C."/>
            <person name="Ashburner M."/>
            <person name="Gelbart W.M."/>
            <person name="Rubin G.M."/>
            <person name="Lewis S.E."/>
        </authorList>
    </citation>
    <scope>GENOME REANNOTATION</scope>
    <source>
        <strain>Berkeley</strain>
    </source>
</reference>
<reference key="4">
    <citation type="journal article" date="2002" name="Genome Biol.">
        <title>A Drosophila full-length cDNA resource.</title>
        <authorList>
            <person name="Stapleton M."/>
            <person name="Carlson J.W."/>
            <person name="Brokstein P."/>
            <person name="Yu C."/>
            <person name="Champe M."/>
            <person name="George R.A."/>
            <person name="Guarin H."/>
            <person name="Kronmiller B."/>
            <person name="Pacleb J.M."/>
            <person name="Park S."/>
            <person name="Wan K.H."/>
            <person name="Rubin G.M."/>
            <person name="Celniker S.E."/>
        </authorList>
    </citation>
    <scope>NUCLEOTIDE SEQUENCE [LARGE SCALE MRNA]</scope>
    <source>
        <strain>Berkeley</strain>
        <tissue>Embryo</tissue>
    </source>
</reference>
<reference key="5">
    <citation type="journal article" date="1999" name="Development">
        <title>loco encodes an RGS protein required for Drosophila glial differentiation.</title>
        <authorList>
            <person name="Granderath S."/>
            <person name="Stollewerk A."/>
            <person name="Greig S."/>
            <person name="Goodman C.S."/>
            <person name="O'Kane C.J."/>
            <person name="Klambt C."/>
        </authorList>
    </citation>
    <scope>FUNCTION</scope>
    <scope>INTERACTION WITH LOCO</scope>
    <scope>DEVELOPMENTAL STAGE</scope>
</reference>
<reference key="6">
    <citation type="journal article" date="2005" name="Genes Dev.">
        <title>Locomotion defects, together with Pins, regulates heterotrimeric G-protein signaling during Drosophila neuroblast asymmetric divisions.</title>
        <authorList>
            <person name="Yu F."/>
            <person name="Wang H."/>
            <person name="Qian H."/>
            <person name="Kaushik R."/>
            <person name="Bownes M."/>
            <person name="Yang X."/>
            <person name="Chia W."/>
        </authorList>
    </citation>
    <scope>FUNCTION</scope>
    <scope>INTERACTION WITH LOCO AND RAPS/PINS</scope>
    <scope>SUBCELLULAR LOCATION</scope>
    <scope>MUTAGENESIS OF GLN-205</scope>
</reference>
<evidence type="ECO:0000250" key="1"/>
<evidence type="ECO:0000255" key="2"/>
<evidence type="ECO:0000255" key="3">
    <source>
        <dbReference type="PROSITE-ProRule" id="PRU01230"/>
    </source>
</evidence>
<evidence type="ECO:0000269" key="4">
    <source>
    </source>
</evidence>
<evidence type="ECO:0000269" key="5">
    <source>
    </source>
</evidence>
<evidence type="ECO:0000269" key="6">
    <source>
    </source>
</evidence>
<evidence type="ECO:0000305" key="7"/>
<proteinExistence type="evidence at protein level"/>
<sequence length="355" mass="40596">MGCAVSTARDKEAIERSKNIDRALRAEGERAASEVKLLLLGAGESGKSTIVKQMKIIHDTGYSQEECEEYRRVVFSNTVQSLMVIIRAMGRLKIEFADPSRTDIARQFFTHASAADEGILLPEIVLLMKKLWADGGVQQSFARSREYQLNDSAGYYLNSLDRIAQPNYIPTQQDVLRTRVKTTGIIETHFSCKQLHFKLFDVGGQRSERKKWIHCFEGVTAIIFCVALSGYDLVLAEDEEMNRMIESLKLFDSICNSKWFVETSIILFLNKKDLFEEKIKRSPLTICFPEYTGTNTFEEAANYIRMKFENLNKRKDQKEIYTHLTCATDTNNVKFVFDAVTDVIIKNNLKQIGLF</sequence>
<gene>
    <name type="primary">Galphai</name>
    <name type="synonym">G-ialpha65A</name>
    <name type="synonym">G-OA65C</name>
    <name type="ORF">CG10060</name>
</gene>
<dbReference type="EMBL" id="M23093">
    <property type="status" value="NOT_ANNOTATED_CDS"/>
    <property type="molecule type" value="Genomic_DNA"/>
</dbReference>
<dbReference type="EMBL" id="M23094">
    <property type="protein sequence ID" value="AAA28565.1"/>
    <property type="molecule type" value="Genomic_DNA"/>
</dbReference>
<dbReference type="EMBL" id="AE014296">
    <property type="protein sequence ID" value="AAF50626.1"/>
    <property type="molecule type" value="Genomic_DNA"/>
</dbReference>
<dbReference type="EMBL" id="AY051670">
    <property type="protein sequence ID" value="AAK93094.1"/>
    <property type="molecule type" value="mRNA"/>
</dbReference>
<dbReference type="PIR" id="A31076">
    <property type="entry name" value="RGFFA"/>
</dbReference>
<dbReference type="RefSeq" id="NP_477502.1">
    <property type="nucleotide sequence ID" value="NM_058154.5"/>
</dbReference>
<dbReference type="SMR" id="P20353"/>
<dbReference type="BioGRID" id="64214">
    <property type="interactions" value="12"/>
</dbReference>
<dbReference type="DIP" id="DIP-17262N"/>
<dbReference type="FunCoup" id="P20353">
    <property type="interactions" value="1363"/>
</dbReference>
<dbReference type="IntAct" id="P20353">
    <property type="interactions" value="7"/>
</dbReference>
<dbReference type="STRING" id="7227.FBpp0076643"/>
<dbReference type="SwissPalm" id="P20353"/>
<dbReference type="PaxDb" id="7227-FBpp0076643"/>
<dbReference type="EnsemblMetazoa" id="FBtr0076934">
    <property type="protein sequence ID" value="FBpp0076643"/>
    <property type="gene ID" value="FBgn0001104"/>
</dbReference>
<dbReference type="GeneID" id="38765"/>
<dbReference type="KEGG" id="dme:Dmel_CG10060"/>
<dbReference type="AGR" id="FB:FBgn0001104"/>
<dbReference type="CTD" id="38765"/>
<dbReference type="FlyBase" id="FBgn0001104">
    <property type="gene designation" value="Galphai"/>
</dbReference>
<dbReference type="VEuPathDB" id="VectorBase:FBgn0001104"/>
<dbReference type="eggNOG" id="KOG0082">
    <property type="taxonomic scope" value="Eukaryota"/>
</dbReference>
<dbReference type="GeneTree" id="ENSGT00940000165593"/>
<dbReference type="HOGENOM" id="CLU_014184_6_0_1"/>
<dbReference type="InParanoid" id="P20353"/>
<dbReference type="OMA" id="YMQLQFE"/>
<dbReference type="OrthoDB" id="5817230at2759"/>
<dbReference type="PhylomeDB" id="P20353"/>
<dbReference type="Reactome" id="R-DME-170670">
    <property type="pathway name" value="Adenylate cyclase inhibitory pathway"/>
</dbReference>
<dbReference type="Reactome" id="R-DME-392170">
    <property type="pathway name" value="ADP signalling through P2Y purinoceptor 12"/>
</dbReference>
<dbReference type="Reactome" id="R-DME-400042">
    <property type="pathway name" value="Adrenaline,noradrenaline inhibits insulin secretion"/>
</dbReference>
<dbReference type="Reactome" id="R-DME-418594">
    <property type="pathway name" value="G alpha (i) signalling events"/>
</dbReference>
<dbReference type="Reactome" id="R-DME-9009391">
    <property type="pathway name" value="Extra-nuclear estrogen signaling"/>
</dbReference>
<dbReference type="SignaLink" id="P20353"/>
<dbReference type="BioGRID-ORCS" id="38765">
    <property type="hits" value="0 hits in 3 CRISPR screens"/>
</dbReference>
<dbReference type="ChiTaRS" id="Galphai">
    <property type="organism name" value="fly"/>
</dbReference>
<dbReference type="GenomeRNAi" id="38765"/>
<dbReference type="PRO" id="PR:P20353"/>
<dbReference type="Proteomes" id="UP000000803">
    <property type="component" value="Chromosome 3L"/>
</dbReference>
<dbReference type="Bgee" id="FBgn0001104">
    <property type="expression patterns" value="Expressed in dorsal appendage forming follicle cell in ovary and 189 other cell types or tissues"/>
</dbReference>
<dbReference type="GO" id="GO:0045179">
    <property type="term" value="C:apical cortex"/>
    <property type="evidence" value="ECO:0000314"/>
    <property type="project" value="UniProtKB"/>
</dbReference>
<dbReference type="GO" id="GO:0016324">
    <property type="term" value="C:apical plasma membrane"/>
    <property type="evidence" value="ECO:0007669"/>
    <property type="project" value="UniProtKB-SubCell"/>
</dbReference>
<dbReference type="GO" id="GO:0005938">
    <property type="term" value="C:cell cortex"/>
    <property type="evidence" value="ECO:0000304"/>
    <property type="project" value="FlyBase"/>
</dbReference>
<dbReference type="GO" id="GO:0005737">
    <property type="term" value="C:cytoplasm"/>
    <property type="evidence" value="ECO:0000318"/>
    <property type="project" value="GO_Central"/>
</dbReference>
<dbReference type="GO" id="GO:0005834">
    <property type="term" value="C:heterotrimeric G-protein complex"/>
    <property type="evidence" value="ECO:0000318"/>
    <property type="project" value="GO_Central"/>
</dbReference>
<dbReference type="GO" id="GO:0005886">
    <property type="term" value="C:plasma membrane"/>
    <property type="evidence" value="ECO:0007005"/>
    <property type="project" value="FlyBase"/>
</dbReference>
<dbReference type="GO" id="GO:0003677">
    <property type="term" value="F:DNA binding"/>
    <property type="evidence" value="ECO:0000314"/>
    <property type="project" value="FlyBase"/>
</dbReference>
<dbReference type="GO" id="GO:0001664">
    <property type="term" value="F:G protein-coupled receptor binding"/>
    <property type="evidence" value="ECO:0000318"/>
    <property type="project" value="GO_Central"/>
</dbReference>
<dbReference type="GO" id="GO:0031683">
    <property type="term" value="F:G-protein beta/gamma-subunit complex binding"/>
    <property type="evidence" value="ECO:0000318"/>
    <property type="project" value="GO_Central"/>
</dbReference>
<dbReference type="GO" id="GO:0005525">
    <property type="term" value="F:GTP binding"/>
    <property type="evidence" value="ECO:0007669"/>
    <property type="project" value="UniProtKB-KW"/>
</dbReference>
<dbReference type="GO" id="GO:0003924">
    <property type="term" value="F:GTPase activity"/>
    <property type="evidence" value="ECO:0000318"/>
    <property type="project" value="GO_Central"/>
</dbReference>
<dbReference type="GO" id="GO:0046872">
    <property type="term" value="F:metal ion binding"/>
    <property type="evidence" value="ECO:0007669"/>
    <property type="project" value="UniProtKB-KW"/>
</dbReference>
<dbReference type="GO" id="GO:0007188">
    <property type="term" value="P:adenylate cyclase-modulating G protein-coupled receptor signaling pathway"/>
    <property type="evidence" value="ECO:0000318"/>
    <property type="project" value="GO_Central"/>
</dbReference>
<dbReference type="GO" id="GO:0008356">
    <property type="term" value="P:asymmetric cell division"/>
    <property type="evidence" value="ECO:0000315"/>
    <property type="project" value="FlyBase"/>
</dbReference>
<dbReference type="GO" id="GO:0055059">
    <property type="term" value="P:asymmetric neuroblast division"/>
    <property type="evidence" value="ECO:0000315"/>
    <property type="project" value="FlyBase"/>
</dbReference>
<dbReference type="GO" id="GO:0045167">
    <property type="term" value="P:asymmetric protein localization involved in cell fate determination"/>
    <property type="evidence" value="ECO:0000315"/>
    <property type="project" value="FlyBase"/>
</dbReference>
<dbReference type="GO" id="GO:0032291">
    <property type="term" value="P:axon ensheathment in central nervous system"/>
    <property type="evidence" value="ECO:0000315"/>
    <property type="project" value="UniProtKB"/>
</dbReference>
<dbReference type="GO" id="GO:0019722">
    <property type="term" value="P:calcium-mediated signaling"/>
    <property type="evidence" value="ECO:0000315"/>
    <property type="project" value="FlyBase"/>
</dbReference>
<dbReference type="GO" id="GO:0030866">
    <property type="term" value="P:cortical actin cytoskeleton organization"/>
    <property type="evidence" value="ECO:0000315"/>
    <property type="project" value="UniProtKB"/>
</dbReference>
<dbReference type="GO" id="GO:0060857">
    <property type="term" value="P:establishment of glial blood-brain barrier"/>
    <property type="evidence" value="ECO:0000315"/>
    <property type="project" value="FlyBase"/>
</dbReference>
<dbReference type="GO" id="GO:0051294">
    <property type="term" value="P:establishment of spindle orientation"/>
    <property type="evidence" value="ECO:0000315"/>
    <property type="project" value="FlyBase"/>
</dbReference>
<dbReference type="GO" id="GO:0007186">
    <property type="term" value="P:G protein-coupled receptor signaling pathway"/>
    <property type="evidence" value="ECO:0000315"/>
    <property type="project" value="UniProtKB"/>
</dbReference>
<dbReference type="GO" id="GO:0032880">
    <property type="term" value="P:regulation of protein localization"/>
    <property type="evidence" value="ECO:0000315"/>
    <property type="project" value="FlyBase"/>
</dbReference>
<dbReference type="GO" id="GO:0019991">
    <property type="term" value="P:septate junction assembly"/>
    <property type="evidence" value="ECO:0000315"/>
    <property type="project" value="FlyBase"/>
</dbReference>
<dbReference type="GO" id="GO:0007419">
    <property type="term" value="P:ventral cord development"/>
    <property type="evidence" value="ECO:0000315"/>
    <property type="project" value="FlyBase"/>
</dbReference>
<dbReference type="CDD" id="cd00066">
    <property type="entry name" value="G-alpha"/>
    <property type="match status" value="1"/>
</dbReference>
<dbReference type="FunFam" id="1.10.400.10:FF:000001">
    <property type="entry name" value="Guanine nucleotide-binding protein G(I) subunit alpha"/>
    <property type="match status" value="1"/>
</dbReference>
<dbReference type="FunFam" id="3.40.50.300:FF:000720">
    <property type="entry name" value="Guanine nucleotide-binding protein G(k) subunit alpha"/>
    <property type="match status" value="1"/>
</dbReference>
<dbReference type="FunFam" id="3.40.50.300:FF:003800">
    <property type="entry name" value="Guanine nucleotide-binding protein G(k) subunit alpha"/>
    <property type="match status" value="1"/>
</dbReference>
<dbReference type="Gene3D" id="1.10.400.10">
    <property type="entry name" value="GI Alpha 1, domain 2-like"/>
    <property type="match status" value="1"/>
</dbReference>
<dbReference type="Gene3D" id="3.40.50.300">
    <property type="entry name" value="P-loop containing nucleotide triphosphate hydrolases"/>
    <property type="match status" value="1"/>
</dbReference>
<dbReference type="InterPro" id="IPR001408">
    <property type="entry name" value="Gprotein_alpha_I"/>
</dbReference>
<dbReference type="InterPro" id="IPR001019">
    <property type="entry name" value="Gprotein_alpha_su"/>
</dbReference>
<dbReference type="InterPro" id="IPR011025">
    <property type="entry name" value="GproteinA_insert"/>
</dbReference>
<dbReference type="InterPro" id="IPR027417">
    <property type="entry name" value="P-loop_NTPase"/>
</dbReference>
<dbReference type="PANTHER" id="PTHR10218:SF227">
    <property type="entry name" value="G PROTEIN ALPHA I SUBUNIT"/>
    <property type="match status" value="1"/>
</dbReference>
<dbReference type="PANTHER" id="PTHR10218">
    <property type="entry name" value="GTP-BINDING PROTEIN ALPHA SUBUNIT"/>
    <property type="match status" value="1"/>
</dbReference>
<dbReference type="Pfam" id="PF00503">
    <property type="entry name" value="G-alpha"/>
    <property type="match status" value="1"/>
</dbReference>
<dbReference type="PRINTS" id="PR00318">
    <property type="entry name" value="GPROTEINA"/>
</dbReference>
<dbReference type="PRINTS" id="PR00441">
    <property type="entry name" value="GPROTEINAI"/>
</dbReference>
<dbReference type="SMART" id="SM00275">
    <property type="entry name" value="G_alpha"/>
    <property type="match status" value="1"/>
</dbReference>
<dbReference type="SUPFAM" id="SSF52540">
    <property type="entry name" value="P-loop containing nucleoside triphosphate hydrolases"/>
    <property type="match status" value="1"/>
</dbReference>
<dbReference type="SUPFAM" id="SSF47895">
    <property type="entry name" value="Transducin (alpha subunit), insertion domain"/>
    <property type="match status" value="1"/>
</dbReference>
<dbReference type="PROSITE" id="PS51882">
    <property type="entry name" value="G_ALPHA"/>
    <property type="match status" value="1"/>
</dbReference>